<reference key="1">
    <citation type="journal article" date="1994" name="J. Bacteriol.">
        <title>The mannitol repressor (MtlR) of Escherichia coli.</title>
        <authorList>
            <person name="Figge R.M."/>
            <person name="Ramseier T.M."/>
            <person name="Saier M.H. Jr."/>
        </authorList>
    </citation>
    <scope>NUCLEOTIDE SEQUENCE [GENOMIC DNA]</scope>
    <scope>FUNCTION</scope>
    <scope>DISRUPTION PHENOTYPE</scope>
    <source>
        <strain>K12</strain>
    </source>
</reference>
<reference key="2">
    <citation type="journal article" date="1990" name="Mol. Microbiol.">
        <title>Corrected sequence of the mannitol (mtl) operon in Escherichia coli.</title>
        <authorList>
            <person name="Jaiang W."/>
            <person name="Wu L.F."/>
            <person name="Tomich J."/>
            <person name="Saier M.H. Jr."/>
            <person name="Nichaus W.G."/>
        </authorList>
    </citation>
    <scope>NUCLEOTIDE SEQUENCE [GENOMIC DNA]</scope>
    <source>
        <strain>K12</strain>
    </source>
</reference>
<reference key="3">
    <citation type="journal article" date="1994" name="Nucleic Acids Res.">
        <title>Analysis of the Escherichia coli genome. V. DNA sequence of the region from 76.0 to 81.5 minutes.</title>
        <authorList>
            <person name="Sofia H.J."/>
            <person name="Burland V."/>
            <person name="Daniels D.L."/>
            <person name="Plunkett G. III"/>
            <person name="Blattner F.R."/>
        </authorList>
    </citation>
    <scope>NUCLEOTIDE SEQUENCE [LARGE SCALE GENOMIC DNA]</scope>
    <source>
        <strain>K12 / MG1655 / ATCC 47076</strain>
    </source>
</reference>
<reference key="4">
    <citation type="journal article" date="1997" name="Science">
        <title>The complete genome sequence of Escherichia coli K-12.</title>
        <authorList>
            <person name="Blattner F.R."/>
            <person name="Plunkett G. III"/>
            <person name="Bloch C.A."/>
            <person name="Perna N.T."/>
            <person name="Burland V."/>
            <person name="Riley M."/>
            <person name="Collado-Vides J."/>
            <person name="Glasner J.D."/>
            <person name="Rode C.K."/>
            <person name="Mayhew G.F."/>
            <person name="Gregor J."/>
            <person name="Davis N.W."/>
            <person name="Kirkpatrick H.A."/>
            <person name="Goeden M.A."/>
            <person name="Rose D.J."/>
            <person name="Mau B."/>
            <person name="Shao Y."/>
        </authorList>
    </citation>
    <scope>NUCLEOTIDE SEQUENCE [LARGE SCALE GENOMIC DNA]</scope>
    <source>
        <strain>K12 / MG1655 / ATCC 47076</strain>
    </source>
</reference>
<reference key="5">
    <citation type="journal article" date="2006" name="Mol. Syst. Biol.">
        <title>Highly accurate genome sequences of Escherichia coli K-12 strains MG1655 and W3110.</title>
        <authorList>
            <person name="Hayashi K."/>
            <person name="Morooka N."/>
            <person name="Yamamoto Y."/>
            <person name="Fujita K."/>
            <person name="Isono K."/>
            <person name="Choi S."/>
            <person name="Ohtsubo E."/>
            <person name="Baba T."/>
            <person name="Wanner B.L."/>
            <person name="Mori H."/>
            <person name="Horiuchi T."/>
        </authorList>
    </citation>
    <scope>NUCLEOTIDE SEQUENCE [LARGE SCALE GENOMIC DNA]</scope>
    <source>
        <strain>K12 / W3110 / ATCC 27325 / DSM 5911</strain>
    </source>
</reference>
<reference key="6">
    <citation type="journal article" date="2009" name="J. Biol. Chem.">
        <title>The mannitol operon repressor MtlR belongs to a new class of transcription regulators in bacteria.</title>
        <authorList>
            <person name="Tan K."/>
            <person name="Clancy S."/>
            <person name="Borovilos M."/>
            <person name="Zhou M."/>
            <person name="Hoerer S."/>
            <person name="Moy S."/>
            <person name="Volkart L.L."/>
            <person name="Sassoon J."/>
            <person name="Baumann U."/>
            <person name="Joachimiak A."/>
        </authorList>
    </citation>
    <scope>FUNCTION</scope>
    <scope>SUBUNIT</scope>
</reference>
<feature type="chain" id="PRO_0000096628" description="Mannitol operon repressor">
    <location>
        <begin position="1"/>
        <end position="195"/>
    </location>
</feature>
<feature type="helix" evidence="5">
    <location>
        <begin position="24"/>
        <end position="37"/>
    </location>
</feature>
<feature type="helix" evidence="5">
    <location>
        <begin position="42"/>
        <end position="64"/>
    </location>
</feature>
<feature type="helix" evidence="5">
    <location>
        <begin position="73"/>
        <end position="80"/>
    </location>
</feature>
<feature type="strand" evidence="5">
    <location>
        <begin position="84"/>
        <end position="86"/>
    </location>
</feature>
<feature type="helix" evidence="5">
    <location>
        <begin position="89"/>
        <end position="99"/>
    </location>
</feature>
<feature type="helix" evidence="5">
    <location>
        <begin position="104"/>
        <end position="121"/>
    </location>
</feature>
<feature type="helix" evidence="5">
    <location>
        <begin position="132"/>
        <end position="139"/>
    </location>
</feature>
<feature type="helix" evidence="5">
    <location>
        <begin position="158"/>
        <end position="187"/>
    </location>
</feature>
<protein>
    <recommendedName>
        <fullName evidence="3">Mannitol operon repressor</fullName>
    </recommendedName>
    <alternativeName>
        <fullName evidence="3">Mannitol repressor protein</fullName>
    </alternativeName>
</protein>
<comment type="function">
    <text evidence="1 2">Involved in the repression of the expression of the mannitol mtlADR operon (PubMed:8300537). Does not bind the operator/promoter regulatory region of this operon (PubMed:19840941). Therefore, seems to belong to a new class of transcription factors in bacteria that may regulate gene expression indirectly, perhaps as a part of a larger transcriptional complex.</text>
</comment>
<comment type="subunit">
    <text evidence="1">Homodimer. Can also form higher level multimer aggregates.</text>
</comment>
<comment type="disruption phenotype">
    <text evidence="2">Inactivation of this gene leads to the constitutive expression of the mannitol operon.</text>
</comment>
<comment type="similarity">
    <text evidence="4">Belongs to the MtlR/FumE family.</text>
</comment>
<keyword id="KW-0002">3D-structure</keyword>
<keyword id="KW-1185">Reference proteome</keyword>
<keyword id="KW-0678">Repressor</keyword>
<keyword id="KW-0804">Transcription</keyword>
<keyword id="KW-0805">Transcription regulation</keyword>
<name>MTLR_ECOLI</name>
<dbReference type="EMBL" id="U03845">
    <property type="protein sequence ID" value="AAA92662.1"/>
    <property type="molecule type" value="Genomic_DNA"/>
</dbReference>
<dbReference type="EMBL" id="X51359">
    <property type="status" value="NOT_ANNOTATED_CDS"/>
    <property type="molecule type" value="Genomic_DNA"/>
</dbReference>
<dbReference type="EMBL" id="U00039">
    <property type="protein sequence ID" value="AAB18578.1"/>
    <property type="molecule type" value="Genomic_DNA"/>
</dbReference>
<dbReference type="EMBL" id="U00096">
    <property type="protein sequence ID" value="AAC76625.1"/>
    <property type="molecule type" value="Genomic_DNA"/>
</dbReference>
<dbReference type="EMBL" id="AP009048">
    <property type="protein sequence ID" value="BAE77692.1"/>
    <property type="molecule type" value="Genomic_DNA"/>
</dbReference>
<dbReference type="PIR" id="B36970">
    <property type="entry name" value="B36970"/>
</dbReference>
<dbReference type="RefSeq" id="NP_418058.1">
    <property type="nucleotide sequence ID" value="NC_000913.3"/>
</dbReference>
<dbReference type="RefSeq" id="WP_000228269.1">
    <property type="nucleotide sequence ID" value="NZ_SSZK01000022.1"/>
</dbReference>
<dbReference type="PDB" id="6KCR">
    <property type="method" value="X-ray"/>
    <property type="resolution" value="3.50 A"/>
    <property type="chains" value="A/C=1-195"/>
</dbReference>
<dbReference type="PDBsum" id="6KCR"/>
<dbReference type="SMR" id="P0AF10"/>
<dbReference type="BioGRID" id="4263545">
    <property type="interactions" value="154"/>
</dbReference>
<dbReference type="BioGRID" id="852423">
    <property type="interactions" value="3"/>
</dbReference>
<dbReference type="FunCoup" id="P0AF10">
    <property type="interactions" value="126"/>
</dbReference>
<dbReference type="IntAct" id="P0AF10">
    <property type="interactions" value="11"/>
</dbReference>
<dbReference type="STRING" id="511145.b3601"/>
<dbReference type="PaxDb" id="511145-b3601"/>
<dbReference type="EnsemblBacteria" id="AAC76625">
    <property type="protein sequence ID" value="AAC76625"/>
    <property type="gene ID" value="b3601"/>
</dbReference>
<dbReference type="GeneID" id="75173794"/>
<dbReference type="GeneID" id="948116"/>
<dbReference type="KEGG" id="ecj:JW3575"/>
<dbReference type="KEGG" id="eco:b3601"/>
<dbReference type="PATRIC" id="fig|1411691.4.peg.3106"/>
<dbReference type="EchoBASE" id="EB1908"/>
<dbReference type="eggNOG" id="COG3722">
    <property type="taxonomic scope" value="Bacteria"/>
</dbReference>
<dbReference type="HOGENOM" id="CLU_099448_0_0_6"/>
<dbReference type="InParanoid" id="P0AF10"/>
<dbReference type="OMA" id="KMGMVQL"/>
<dbReference type="OrthoDB" id="7060391at2"/>
<dbReference type="PhylomeDB" id="P0AF10"/>
<dbReference type="BioCyc" id="EcoCyc:PD00369"/>
<dbReference type="PRO" id="PR:P0AF10"/>
<dbReference type="Proteomes" id="UP000000625">
    <property type="component" value="Chromosome"/>
</dbReference>
<dbReference type="GO" id="GO:0045892">
    <property type="term" value="P:negative regulation of DNA-templated transcription"/>
    <property type="evidence" value="ECO:0000315"/>
    <property type="project" value="EcoCyc"/>
</dbReference>
<dbReference type="FunFam" id="1.20.120.330:FF:000004">
    <property type="entry name" value="Mannitol operon repressor"/>
    <property type="match status" value="1"/>
</dbReference>
<dbReference type="Gene3D" id="1.20.120.330">
    <property type="entry name" value="Nucleotidyltransferases domain 2"/>
    <property type="match status" value="1"/>
</dbReference>
<dbReference type="InterPro" id="IPR007761">
    <property type="entry name" value="MtlR-like"/>
</dbReference>
<dbReference type="InterPro" id="IPR038026">
    <property type="entry name" value="MtlR-like_sf"/>
</dbReference>
<dbReference type="NCBIfam" id="NF008234">
    <property type="entry name" value="PRK11001.1"/>
    <property type="match status" value="1"/>
</dbReference>
<dbReference type="PANTHER" id="PTHR37941">
    <property type="entry name" value="FUMARASE E-RELATED"/>
    <property type="match status" value="1"/>
</dbReference>
<dbReference type="PANTHER" id="PTHR37941:SF1">
    <property type="entry name" value="FUMARASE E-RELATED"/>
    <property type="match status" value="1"/>
</dbReference>
<dbReference type="Pfam" id="PF05068">
    <property type="entry name" value="MtlR"/>
    <property type="match status" value="1"/>
</dbReference>
<dbReference type="SUPFAM" id="SSF158668">
    <property type="entry name" value="MtlR-like"/>
    <property type="match status" value="1"/>
</dbReference>
<proteinExistence type="evidence at protein level"/>
<organism>
    <name type="scientific">Escherichia coli (strain K12)</name>
    <dbReference type="NCBI Taxonomy" id="83333"/>
    <lineage>
        <taxon>Bacteria</taxon>
        <taxon>Pseudomonadati</taxon>
        <taxon>Pseudomonadota</taxon>
        <taxon>Gammaproteobacteria</taxon>
        <taxon>Enterobacterales</taxon>
        <taxon>Enterobacteriaceae</taxon>
        <taxon>Escherichia</taxon>
    </lineage>
</organism>
<evidence type="ECO:0000269" key="1">
    <source>
    </source>
</evidence>
<evidence type="ECO:0000269" key="2">
    <source>
    </source>
</evidence>
<evidence type="ECO:0000303" key="3">
    <source>
    </source>
</evidence>
<evidence type="ECO:0000305" key="4"/>
<evidence type="ECO:0007829" key="5">
    <source>
        <dbReference type="PDB" id="6KCR"/>
    </source>
</evidence>
<gene>
    <name evidence="3" type="primary">mtlR</name>
    <name type="ordered locus">b3601</name>
    <name type="ordered locus">JW3575</name>
</gene>
<sequence>MVDQAQDTLRPNNRLSDMQATMEQTQAFENRVLERLNAGKTVRSFLITAVELLTEAVNLLVLQVFRKDDYAVKYAVEPLLDGDGPLGDLSVRLKLIYGLGVINRQEYEDAELLMALREELNHDGNEYAFTDDEILGPFGELHCVAALPPPPQFEPADSSLYAMQIQRYQQAVRSTMVLSLTELISKISLKKAFQK</sequence>
<accession>P0AF10</accession>
<accession>P36563</accession>
<accession>Q2M7R4</accession>